<keyword id="KW-0687">Ribonucleoprotein</keyword>
<keyword id="KW-0689">Ribosomal protein</keyword>
<keyword id="KW-0694">RNA-binding</keyword>
<keyword id="KW-0699">rRNA-binding</keyword>
<keyword id="KW-0820">tRNA-binding</keyword>
<feature type="chain" id="PRO_0000226419" description="Small ribosomal subunit protein uS12">
    <location>
        <begin position="1"/>
        <end position="137"/>
    </location>
</feature>
<feature type="region of interest" description="Disordered" evidence="2">
    <location>
        <begin position="1"/>
        <end position="21"/>
    </location>
</feature>
<feature type="region of interest" description="Disordered" evidence="2">
    <location>
        <begin position="33"/>
        <end position="57"/>
    </location>
</feature>
<evidence type="ECO:0000255" key="1">
    <source>
        <dbReference type="HAMAP-Rule" id="MF_00403"/>
    </source>
</evidence>
<evidence type="ECO:0000256" key="2">
    <source>
        <dbReference type="SAM" id="MobiDB-lite"/>
    </source>
</evidence>
<evidence type="ECO:0000305" key="3"/>
<dbReference type="EMBL" id="CP000056">
    <property type="protein sequence ID" value="AAX71338.1"/>
    <property type="molecule type" value="Genomic_DNA"/>
</dbReference>
<dbReference type="RefSeq" id="WP_002986049.1">
    <property type="nucleotide sequence ID" value="NC_007296.2"/>
</dbReference>
<dbReference type="SMR" id="Q48VB8"/>
<dbReference type="GeneID" id="69900197"/>
<dbReference type="KEGG" id="spb:M28_Spy0224"/>
<dbReference type="HOGENOM" id="CLU_104295_1_2_9"/>
<dbReference type="GO" id="GO:0015935">
    <property type="term" value="C:small ribosomal subunit"/>
    <property type="evidence" value="ECO:0007669"/>
    <property type="project" value="InterPro"/>
</dbReference>
<dbReference type="GO" id="GO:0019843">
    <property type="term" value="F:rRNA binding"/>
    <property type="evidence" value="ECO:0007669"/>
    <property type="project" value="UniProtKB-UniRule"/>
</dbReference>
<dbReference type="GO" id="GO:0003735">
    <property type="term" value="F:structural constituent of ribosome"/>
    <property type="evidence" value="ECO:0007669"/>
    <property type="project" value="InterPro"/>
</dbReference>
<dbReference type="GO" id="GO:0000049">
    <property type="term" value="F:tRNA binding"/>
    <property type="evidence" value="ECO:0007669"/>
    <property type="project" value="UniProtKB-UniRule"/>
</dbReference>
<dbReference type="GO" id="GO:0006412">
    <property type="term" value="P:translation"/>
    <property type="evidence" value="ECO:0007669"/>
    <property type="project" value="UniProtKB-UniRule"/>
</dbReference>
<dbReference type="CDD" id="cd03368">
    <property type="entry name" value="Ribosomal_S12"/>
    <property type="match status" value="1"/>
</dbReference>
<dbReference type="FunFam" id="2.40.50.140:FF:000001">
    <property type="entry name" value="30S ribosomal protein S12"/>
    <property type="match status" value="1"/>
</dbReference>
<dbReference type="Gene3D" id="2.40.50.140">
    <property type="entry name" value="Nucleic acid-binding proteins"/>
    <property type="match status" value="1"/>
</dbReference>
<dbReference type="HAMAP" id="MF_00403_B">
    <property type="entry name" value="Ribosomal_uS12_B"/>
    <property type="match status" value="1"/>
</dbReference>
<dbReference type="InterPro" id="IPR012340">
    <property type="entry name" value="NA-bd_OB-fold"/>
</dbReference>
<dbReference type="InterPro" id="IPR006032">
    <property type="entry name" value="Ribosomal_uS12"/>
</dbReference>
<dbReference type="InterPro" id="IPR005679">
    <property type="entry name" value="Ribosomal_uS12_bac"/>
</dbReference>
<dbReference type="NCBIfam" id="TIGR00981">
    <property type="entry name" value="rpsL_bact"/>
    <property type="match status" value="1"/>
</dbReference>
<dbReference type="PANTHER" id="PTHR11652">
    <property type="entry name" value="30S RIBOSOMAL PROTEIN S12 FAMILY MEMBER"/>
    <property type="match status" value="1"/>
</dbReference>
<dbReference type="Pfam" id="PF00164">
    <property type="entry name" value="Ribosom_S12_S23"/>
    <property type="match status" value="1"/>
</dbReference>
<dbReference type="PRINTS" id="PR01034">
    <property type="entry name" value="RIBOSOMALS12"/>
</dbReference>
<dbReference type="SUPFAM" id="SSF50249">
    <property type="entry name" value="Nucleic acid-binding proteins"/>
    <property type="match status" value="1"/>
</dbReference>
<dbReference type="PROSITE" id="PS00055">
    <property type="entry name" value="RIBOSOMAL_S12"/>
    <property type="match status" value="1"/>
</dbReference>
<reference key="1">
    <citation type="journal article" date="2005" name="J. Infect. Dis.">
        <title>Genome sequence of a serotype M28 strain of group A Streptococcus: potential new insights into puerperal sepsis and bacterial disease specificity.</title>
        <authorList>
            <person name="Green N.M."/>
            <person name="Zhang S."/>
            <person name="Porcella S.F."/>
            <person name="Nagiec M.J."/>
            <person name="Barbian K.D."/>
            <person name="Beres S.B."/>
            <person name="Lefebvre R.B."/>
            <person name="Musser J.M."/>
        </authorList>
    </citation>
    <scope>NUCLEOTIDE SEQUENCE [LARGE SCALE GENOMIC DNA]</scope>
    <source>
        <strain>MGAS6180</strain>
    </source>
</reference>
<proteinExistence type="inferred from homology"/>
<comment type="function">
    <text evidence="1">With S4 and S5 plays an important role in translational accuracy.</text>
</comment>
<comment type="function">
    <text evidence="1">Interacts with and stabilizes bases of the 16S rRNA that are involved in tRNA selection in the A site and with the mRNA backbone. Located at the interface of the 30S and 50S subunits, it traverses the body of the 30S subunit contacting proteins on the other side and probably holding the rRNA structure together. The combined cluster of proteins S8, S12 and S17 appears to hold together the shoulder and platform of the 30S subunit.</text>
</comment>
<comment type="subunit">
    <text evidence="1">Part of the 30S ribosomal subunit. Contacts proteins S8 and S17. May interact with IF1 in the 30S initiation complex.</text>
</comment>
<comment type="similarity">
    <text evidence="1">Belongs to the universal ribosomal protein uS12 family.</text>
</comment>
<comment type="caution">
    <text evidence="3">Because the enzyme that would modify Asp-102 to 3-methylthioaspartic acid has not been found in the proteome of this organism, that modification is not predicted.</text>
</comment>
<name>RS12_STRPM</name>
<gene>
    <name evidence="1" type="primary">rpsL</name>
    <name type="ordered locus">M28_Spy0224</name>
</gene>
<organism>
    <name type="scientific">Streptococcus pyogenes serotype M28 (strain MGAS6180)</name>
    <dbReference type="NCBI Taxonomy" id="319701"/>
    <lineage>
        <taxon>Bacteria</taxon>
        <taxon>Bacillati</taxon>
        <taxon>Bacillota</taxon>
        <taxon>Bacilli</taxon>
        <taxon>Lactobacillales</taxon>
        <taxon>Streptococcaceae</taxon>
        <taxon>Streptococcus</taxon>
    </lineage>
</organism>
<accession>Q48VB8</accession>
<sequence length="137" mass="15086">MPTINQLVRKPRKSKIEKSDSPALNIGYNSHKKVQTKMAAPQKRGVATRVGTMTPKKPNSALRKFARVRLSNLIEVTAYIPGIGHNLQEHSVVLIRGGRVKDLPGVRYHIVRGALDTAGVADRKQGRSKYGAKRPKG</sequence>
<protein>
    <recommendedName>
        <fullName evidence="1">Small ribosomal subunit protein uS12</fullName>
    </recommendedName>
    <alternativeName>
        <fullName evidence="3">30S ribosomal protein S12</fullName>
    </alternativeName>
</protein>